<dbReference type="EMBL" id="AF157835">
    <property type="protein sequence ID" value="AAF03950.1"/>
    <property type="molecule type" value="Genomic_DNA"/>
</dbReference>
<dbReference type="RefSeq" id="NP_050968.1">
    <property type="nucleotide sequence ID" value="NC_000935.1"/>
</dbReference>
<dbReference type="SMR" id="Q9T1U1"/>
<dbReference type="KEGG" id="vg:1262301"/>
<dbReference type="Proteomes" id="UP000000853">
    <property type="component" value="Genome"/>
</dbReference>
<dbReference type="Gene3D" id="2.40.50.70">
    <property type="match status" value="1"/>
</dbReference>
<protein>
    <recommendedName>
        <fullName>Putative protein p7</fullName>
    </recommendedName>
</protein>
<accession>Q9T1U1</accession>
<gene>
    <name type="primary">7</name>
</gene>
<organismHost>
    <name type="scientific">Escherichia coli</name>
    <dbReference type="NCBI Taxonomy" id="562"/>
</organismHost>
<keyword id="KW-1185">Reference proteome</keyword>
<organism>
    <name type="scientific">Acyrthosiphon pisum secondary endosymbiont phage 1</name>
    <name type="common">Bacteriophage APSE-1</name>
    <dbReference type="NCBI Taxonomy" id="2682836"/>
    <lineage>
        <taxon>Viruses</taxon>
        <taxon>Duplodnaviria</taxon>
        <taxon>Heunggongvirae</taxon>
        <taxon>Uroviricota</taxon>
        <taxon>Caudoviricetes</taxon>
        <taxon>Sendosyvirus</taxon>
        <taxon>Sendosyvirus APSE1</taxon>
    </lineage>
</organism>
<proteinExistence type="predicted"/>
<reference key="1">
    <citation type="journal article" date="1999" name="Virology">
        <title>Isolation and characterization of APSE-1, a bacteriophage infecting the secondary endosymbiont of acyrthosiphon pisum.</title>
        <authorList>
            <person name="van der Wilk F."/>
            <person name="Dullemans A.M."/>
            <person name="Verbeek M."/>
            <person name="van den Heuvel J.F.J.M."/>
        </authorList>
    </citation>
    <scope>NUCLEOTIDE SEQUENCE [LARGE SCALE GENOMIC DNA]</scope>
</reference>
<name>VP07_BPAPS</name>
<feature type="chain" id="PRO_0000077852" description="Putative protein p7">
    <location>
        <begin position="1"/>
        <end position="102"/>
    </location>
</feature>
<sequence length="102" mass="11276">MLKLKLLTSLAVFTTLLFSCGASYALSSCSPGVIKYIRYETDNAKTLVIIKLDSMNNENYTDNPRLLQPLTYAYAVGEKVTLHTESCTSGDHGFASFSLRNK</sequence>